<protein>
    <recommendedName>
        <fullName evidence="1">Serine hydroxymethyltransferase</fullName>
        <shortName evidence="1">SHMT</shortName>
        <shortName evidence="1">Serine methylase</shortName>
        <ecNumber evidence="1">2.1.2.1</ecNumber>
    </recommendedName>
</protein>
<accession>B7LDE3</accession>
<dbReference type="EC" id="2.1.2.1" evidence="1"/>
<dbReference type="EMBL" id="CU928145">
    <property type="protein sequence ID" value="CAU98709.1"/>
    <property type="molecule type" value="Genomic_DNA"/>
</dbReference>
<dbReference type="RefSeq" id="WP_000919159.1">
    <property type="nucleotide sequence ID" value="NZ_CP028304.1"/>
</dbReference>
<dbReference type="SMR" id="B7LDE3"/>
<dbReference type="GeneID" id="89517346"/>
<dbReference type="KEGG" id="eck:EC55989_2837"/>
<dbReference type="HOGENOM" id="CLU_022477_2_1_6"/>
<dbReference type="UniPathway" id="UPA00193"/>
<dbReference type="UniPathway" id="UPA00288">
    <property type="reaction ID" value="UER01023"/>
</dbReference>
<dbReference type="Proteomes" id="UP000000746">
    <property type="component" value="Chromosome"/>
</dbReference>
<dbReference type="GO" id="GO:0005829">
    <property type="term" value="C:cytosol"/>
    <property type="evidence" value="ECO:0007669"/>
    <property type="project" value="TreeGrafter"/>
</dbReference>
<dbReference type="GO" id="GO:0004372">
    <property type="term" value="F:glycine hydroxymethyltransferase activity"/>
    <property type="evidence" value="ECO:0007669"/>
    <property type="project" value="UniProtKB-UniRule"/>
</dbReference>
<dbReference type="GO" id="GO:0030170">
    <property type="term" value="F:pyridoxal phosphate binding"/>
    <property type="evidence" value="ECO:0007669"/>
    <property type="project" value="UniProtKB-UniRule"/>
</dbReference>
<dbReference type="GO" id="GO:0019264">
    <property type="term" value="P:glycine biosynthetic process from serine"/>
    <property type="evidence" value="ECO:0007669"/>
    <property type="project" value="UniProtKB-UniRule"/>
</dbReference>
<dbReference type="GO" id="GO:0035999">
    <property type="term" value="P:tetrahydrofolate interconversion"/>
    <property type="evidence" value="ECO:0007669"/>
    <property type="project" value="UniProtKB-UniRule"/>
</dbReference>
<dbReference type="CDD" id="cd00378">
    <property type="entry name" value="SHMT"/>
    <property type="match status" value="1"/>
</dbReference>
<dbReference type="FunFam" id="3.40.640.10:FF:000001">
    <property type="entry name" value="Serine hydroxymethyltransferase"/>
    <property type="match status" value="1"/>
</dbReference>
<dbReference type="FunFam" id="3.90.1150.10:FF:000003">
    <property type="entry name" value="Serine hydroxymethyltransferase"/>
    <property type="match status" value="1"/>
</dbReference>
<dbReference type="Gene3D" id="3.90.1150.10">
    <property type="entry name" value="Aspartate Aminotransferase, domain 1"/>
    <property type="match status" value="1"/>
</dbReference>
<dbReference type="Gene3D" id="3.40.640.10">
    <property type="entry name" value="Type I PLP-dependent aspartate aminotransferase-like (Major domain)"/>
    <property type="match status" value="1"/>
</dbReference>
<dbReference type="HAMAP" id="MF_00051">
    <property type="entry name" value="SHMT"/>
    <property type="match status" value="1"/>
</dbReference>
<dbReference type="InterPro" id="IPR015424">
    <property type="entry name" value="PyrdxlP-dep_Trfase"/>
</dbReference>
<dbReference type="InterPro" id="IPR015421">
    <property type="entry name" value="PyrdxlP-dep_Trfase_major"/>
</dbReference>
<dbReference type="InterPro" id="IPR015422">
    <property type="entry name" value="PyrdxlP-dep_Trfase_small"/>
</dbReference>
<dbReference type="InterPro" id="IPR001085">
    <property type="entry name" value="Ser_HO-MeTrfase"/>
</dbReference>
<dbReference type="InterPro" id="IPR049943">
    <property type="entry name" value="Ser_HO-MeTrfase-like"/>
</dbReference>
<dbReference type="InterPro" id="IPR019798">
    <property type="entry name" value="Ser_HO-MeTrfase_PLP_BS"/>
</dbReference>
<dbReference type="InterPro" id="IPR039429">
    <property type="entry name" value="SHMT-like_dom"/>
</dbReference>
<dbReference type="NCBIfam" id="NF000586">
    <property type="entry name" value="PRK00011.1"/>
    <property type="match status" value="1"/>
</dbReference>
<dbReference type="PANTHER" id="PTHR11680">
    <property type="entry name" value="SERINE HYDROXYMETHYLTRANSFERASE"/>
    <property type="match status" value="1"/>
</dbReference>
<dbReference type="PANTHER" id="PTHR11680:SF50">
    <property type="entry name" value="SERINE HYDROXYMETHYLTRANSFERASE"/>
    <property type="match status" value="1"/>
</dbReference>
<dbReference type="Pfam" id="PF00464">
    <property type="entry name" value="SHMT"/>
    <property type="match status" value="1"/>
</dbReference>
<dbReference type="PIRSF" id="PIRSF000412">
    <property type="entry name" value="SHMT"/>
    <property type="match status" value="1"/>
</dbReference>
<dbReference type="SUPFAM" id="SSF53383">
    <property type="entry name" value="PLP-dependent transferases"/>
    <property type="match status" value="1"/>
</dbReference>
<dbReference type="PROSITE" id="PS00096">
    <property type="entry name" value="SHMT"/>
    <property type="match status" value="1"/>
</dbReference>
<feature type="chain" id="PRO_1000195445" description="Serine hydroxymethyltransferase">
    <location>
        <begin position="1"/>
        <end position="417"/>
    </location>
</feature>
<feature type="binding site" evidence="1">
    <location>
        <position position="121"/>
    </location>
    <ligand>
        <name>(6S)-5,6,7,8-tetrahydrofolate</name>
        <dbReference type="ChEBI" id="CHEBI:57453"/>
    </ligand>
</feature>
<feature type="binding site" evidence="1">
    <location>
        <begin position="125"/>
        <end position="127"/>
    </location>
    <ligand>
        <name>(6S)-5,6,7,8-tetrahydrofolate</name>
        <dbReference type="ChEBI" id="CHEBI:57453"/>
    </ligand>
</feature>
<feature type="binding site" evidence="1">
    <location>
        <begin position="355"/>
        <end position="357"/>
    </location>
    <ligand>
        <name>(6S)-5,6,7,8-tetrahydrofolate</name>
        <dbReference type="ChEBI" id="CHEBI:57453"/>
    </ligand>
</feature>
<feature type="site" description="Plays an important role in substrate specificity" evidence="1">
    <location>
        <position position="228"/>
    </location>
</feature>
<feature type="modified residue" description="N6-acetyllysine" evidence="1">
    <location>
        <position position="54"/>
    </location>
</feature>
<feature type="modified residue" description="N6-(pyridoxal phosphate)lysine" evidence="1">
    <location>
        <position position="229"/>
    </location>
</feature>
<feature type="modified residue" description="N6-acetyllysine" evidence="1">
    <location>
        <position position="250"/>
    </location>
</feature>
<feature type="modified residue" description="N6-acetyllysine" evidence="1">
    <location>
        <position position="285"/>
    </location>
</feature>
<feature type="modified residue" description="N6-acetyllysine" evidence="1">
    <location>
        <position position="354"/>
    </location>
</feature>
<feature type="modified residue" description="N6-acetyllysine" evidence="1">
    <location>
        <position position="375"/>
    </location>
</feature>
<proteinExistence type="inferred from homology"/>
<keyword id="KW-0007">Acetylation</keyword>
<keyword id="KW-0028">Amino-acid biosynthesis</keyword>
<keyword id="KW-0963">Cytoplasm</keyword>
<keyword id="KW-0554">One-carbon metabolism</keyword>
<keyword id="KW-0663">Pyridoxal phosphate</keyword>
<keyword id="KW-1185">Reference proteome</keyword>
<keyword id="KW-0808">Transferase</keyword>
<comment type="function">
    <text evidence="1">Catalyzes the reversible interconversion of serine and glycine with tetrahydrofolate (THF) serving as the one-carbon carrier. This reaction serves as the major source of one-carbon groups required for the biosynthesis of purines, thymidylate, methionine, and other important biomolecules. Also exhibits THF-independent aldolase activity toward beta-hydroxyamino acids, producing glycine and aldehydes, via a retro-aldol mechanism.</text>
</comment>
<comment type="catalytic activity">
    <reaction evidence="1">
        <text>(6R)-5,10-methylene-5,6,7,8-tetrahydrofolate + glycine + H2O = (6S)-5,6,7,8-tetrahydrofolate + L-serine</text>
        <dbReference type="Rhea" id="RHEA:15481"/>
        <dbReference type="ChEBI" id="CHEBI:15377"/>
        <dbReference type="ChEBI" id="CHEBI:15636"/>
        <dbReference type="ChEBI" id="CHEBI:33384"/>
        <dbReference type="ChEBI" id="CHEBI:57305"/>
        <dbReference type="ChEBI" id="CHEBI:57453"/>
        <dbReference type="EC" id="2.1.2.1"/>
    </reaction>
</comment>
<comment type="cofactor">
    <cofactor evidence="1">
        <name>pyridoxal 5'-phosphate</name>
        <dbReference type="ChEBI" id="CHEBI:597326"/>
    </cofactor>
</comment>
<comment type="pathway">
    <text evidence="1">One-carbon metabolism; tetrahydrofolate interconversion.</text>
</comment>
<comment type="pathway">
    <text evidence="1">Amino-acid biosynthesis; glycine biosynthesis; glycine from L-serine: step 1/1.</text>
</comment>
<comment type="subunit">
    <text evidence="1">Homodimer.</text>
</comment>
<comment type="subcellular location">
    <subcellularLocation>
        <location evidence="1">Cytoplasm</location>
    </subcellularLocation>
</comment>
<comment type="similarity">
    <text evidence="1">Belongs to the SHMT family.</text>
</comment>
<organism>
    <name type="scientific">Escherichia coli (strain 55989 / EAEC)</name>
    <dbReference type="NCBI Taxonomy" id="585055"/>
    <lineage>
        <taxon>Bacteria</taxon>
        <taxon>Pseudomonadati</taxon>
        <taxon>Pseudomonadota</taxon>
        <taxon>Gammaproteobacteria</taxon>
        <taxon>Enterobacterales</taxon>
        <taxon>Enterobacteriaceae</taxon>
        <taxon>Escherichia</taxon>
    </lineage>
</organism>
<name>GLYA_ECO55</name>
<evidence type="ECO:0000255" key="1">
    <source>
        <dbReference type="HAMAP-Rule" id="MF_00051"/>
    </source>
</evidence>
<gene>
    <name evidence="1" type="primary">glyA</name>
    <name type="ordered locus">EC55989_2837</name>
</gene>
<sequence>MLKREMNIADYDAELWQAMEQEKVRQEEHIELIASENYTSPRVMQAQGSQLTNKYAEGYPGKRYYGGCEYVDIVEQLAIDRAKELFGADYANVQPHSGSQANFAVYTALLEPGDTVLGMNLAHGGHLTHGSPVNFSGKLYNIVPYGIDATGHIDYADLEKQAKEHKPKMIIGGFSAYSGVVDWAKMREIADSIGAYLFVDMAHVAGLVAAGVYPNPVPHAHVVTTTTHKTLAGPRGGLILAKGGSEELYKKLNSAVFPGGQGGPLMHVIAGKAVALKEAMEPEFKTYQQQVAKNAKAMVEVFLERGYKVVSGGTDNHLFLVDLVDKNLTGKEADAALGRANITVNKNSVPNDPKSPFVTSGIRVGTPAITRRGFKEAEAKELAGWMCDVLDSINDEAVIERIKGKVLDICARYPVYA</sequence>
<reference key="1">
    <citation type="journal article" date="2009" name="PLoS Genet.">
        <title>Organised genome dynamics in the Escherichia coli species results in highly diverse adaptive paths.</title>
        <authorList>
            <person name="Touchon M."/>
            <person name="Hoede C."/>
            <person name="Tenaillon O."/>
            <person name="Barbe V."/>
            <person name="Baeriswyl S."/>
            <person name="Bidet P."/>
            <person name="Bingen E."/>
            <person name="Bonacorsi S."/>
            <person name="Bouchier C."/>
            <person name="Bouvet O."/>
            <person name="Calteau A."/>
            <person name="Chiapello H."/>
            <person name="Clermont O."/>
            <person name="Cruveiller S."/>
            <person name="Danchin A."/>
            <person name="Diard M."/>
            <person name="Dossat C."/>
            <person name="Karoui M.E."/>
            <person name="Frapy E."/>
            <person name="Garry L."/>
            <person name="Ghigo J.M."/>
            <person name="Gilles A.M."/>
            <person name="Johnson J."/>
            <person name="Le Bouguenec C."/>
            <person name="Lescat M."/>
            <person name="Mangenot S."/>
            <person name="Martinez-Jehanne V."/>
            <person name="Matic I."/>
            <person name="Nassif X."/>
            <person name="Oztas S."/>
            <person name="Petit M.A."/>
            <person name="Pichon C."/>
            <person name="Rouy Z."/>
            <person name="Ruf C.S."/>
            <person name="Schneider D."/>
            <person name="Tourret J."/>
            <person name="Vacherie B."/>
            <person name="Vallenet D."/>
            <person name="Medigue C."/>
            <person name="Rocha E.P.C."/>
            <person name="Denamur E."/>
        </authorList>
    </citation>
    <scope>NUCLEOTIDE SEQUENCE [LARGE SCALE GENOMIC DNA]</scope>
    <source>
        <strain>55989 / EAEC</strain>
    </source>
</reference>